<evidence type="ECO:0000250" key="1"/>
<evidence type="ECO:0000250" key="2">
    <source>
        <dbReference type="UniProtKB" id="Q9ZW27"/>
    </source>
</evidence>
<evidence type="ECO:0000305" key="3"/>
<gene>
    <name type="primary">GSTU15</name>
    <name type="ordered locus">At1g59670</name>
    <name type="ORF">T30E16.25</name>
</gene>
<reference key="1">
    <citation type="journal article" date="2000" name="Nature">
        <title>Sequence and analysis of chromosome 1 of the plant Arabidopsis thaliana.</title>
        <authorList>
            <person name="Theologis A."/>
            <person name="Ecker J.R."/>
            <person name="Palm C.J."/>
            <person name="Federspiel N.A."/>
            <person name="Kaul S."/>
            <person name="White O."/>
            <person name="Alonso J."/>
            <person name="Altafi H."/>
            <person name="Araujo R."/>
            <person name="Bowman C.L."/>
            <person name="Brooks S.Y."/>
            <person name="Buehler E."/>
            <person name="Chan A."/>
            <person name="Chao Q."/>
            <person name="Chen H."/>
            <person name="Cheuk R.F."/>
            <person name="Chin C.W."/>
            <person name="Chung M.K."/>
            <person name="Conn L."/>
            <person name="Conway A.B."/>
            <person name="Conway A.R."/>
            <person name="Creasy T.H."/>
            <person name="Dewar K."/>
            <person name="Dunn P."/>
            <person name="Etgu P."/>
            <person name="Feldblyum T.V."/>
            <person name="Feng J.-D."/>
            <person name="Fong B."/>
            <person name="Fujii C.Y."/>
            <person name="Gill J.E."/>
            <person name="Goldsmith A.D."/>
            <person name="Haas B."/>
            <person name="Hansen N.F."/>
            <person name="Hughes B."/>
            <person name="Huizar L."/>
            <person name="Hunter J.L."/>
            <person name="Jenkins J."/>
            <person name="Johnson-Hopson C."/>
            <person name="Khan S."/>
            <person name="Khaykin E."/>
            <person name="Kim C.J."/>
            <person name="Koo H.L."/>
            <person name="Kremenetskaia I."/>
            <person name="Kurtz D.B."/>
            <person name="Kwan A."/>
            <person name="Lam B."/>
            <person name="Langin-Hooper S."/>
            <person name="Lee A."/>
            <person name="Lee J.M."/>
            <person name="Lenz C.A."/>
            <person name="Li J.H."/>
            <person name="Li Y.-P."/>
            <person name="Lin X."/>
            <person name="Liu S.X."/>
            <person name="Liu Z.A."/>
            <person name="Luros J.S."/>
            <person name="Maiti R."/>
            <person name="Marziali A."/>
            <person name="Militscher J."/>
            <person name="Miranda M."/>
            <person name="Nguyen M."/>
            <person name="Nierman W.C."/>
            <person name="Osborne B.I."/>
            <person name="Pai G."/>
            <person name="Peterson J."/>
            <person name="Pham P.K."/>
            <person name="Rizzo M."/>
            <person name="Rooney T."/>
            <person name="Rowley D."/>
            <person name="Sakano H."/>
            <person name="Salzberg S.L."/>
            <person name="Schwartz J.R."/>
            <person name="Shinn P."/>
            <person name="Southwick A.M."/>
            <person name="Sun H."/>
            <person name="Tallon L.J."/>
            <person name="Tambunga G."/>
            <person name="Toriumi M.J."/>
            <person name="Town C.D."/>
            <person name="Utterback T."/>
            <person name="Van Aken S."/>
            <person name="Vaysberg M."/>
            <person name="Vysotskaia V.S."/>
            <person name="Walker M."/>
            <person name="Wu D."/>
            <person name="Yu G."/>
            <person name="Fraser C.M."/>
            <person name="Venter J.C."/>
            <person name="Davis R.W."/>
        </authorList>
    </citation>
    <scope>NUCLEOTIDE SEQUENCE [LARGE SCALE GENOMIC DNA]</scope>
    <source>
        <strain>cv. Columbia</strain>
    </source>
</reference>
<reference key="2">
    <citation type="journal article" date="2017" name="Plant J.">
        <title>Araport11: a complete reannotation of the Arabidopsis thaliana reference genome.</title>
        <authorList>
            <person name="Cheng C.Y."/>
            <person name="Krishnakumar V."/>
            <person name="Chan A.P."/>
            <person name="Thibaud-Nissen F."/>
            <person name="Schobel S."/>
            <person name="Town C.D."/>
        </authorList>
    </citation>
    <scope>GENOME REANNOTATION</scope>
    <source>
        <strain>cv. Columbia</strain>
    </source>
</reference>
<reference key="3">
    <citation type="journal article" date="2006" name="Plant Biotechnol. J.">
        <title>Simultaneous high-throughput recombinational cloning of open reading frames in closed and open configurations.</title>
        <authorList>
            <person name="Underwood B.A."/>
            <person name="Vanderhaeghen R."/>
            <person name="Whitford R."/>
            <person name="Town C.D."/>
            <person name="Hilson P."/>
        </authorList>
    </citation>
    <scope>NUCLEOTIDE SEQUENCE [LARGE SCALE MRNA]</scope>
    <source>
        <strain>cv. Columbia</strain>
    </source>
</reference>
<reference key="4">
    <citation type="submission" date="2002-03" db="EMBL/GenBank/DDBJ databases">
        <title>Full-length cDNA from Arabidopsis thaliana.</title>
        <authorList>
            <person name="Brover V.V."/>
            <person name="Troukhan M.E."/>
            <person name="Alexandrov N.A."/>
            <person name="Lu Y.-P."/>
            <person name="Flavell R.B."/>
            <person name="Feldmann K.A."/>
        </authorList>
    </citation>
    <scope>NUCLEOTIDE SEQUENCE [LARGE SCALE MRNA]</scope>
</reference>
<reference key="5">
    <citation type="journal article" date="2002" name="Plant Mol. Biol.">
        <title>Probing the diversity of the Arabidopsis glutathione S-transferase gene family.</title>
        <authorList>
            <person name="Wagner U."/>
            <person name="Edwards R."/>
            <person name="Dixon D.P."/>
            <person name="Mauch F."/>
        </authorList>
    </citation>
    <scope>GENE FAMILY</scope>
    <scope>NOMENCLATURE</scope>
</reference>
<accession>Q9LQ48</accession>
<accession>A0MED4</accession>
<accession>Q8LF83</accession>
<comment type="function">
    <text evidence="1">May be involved in the conjugation of reduced glutathione to a wide number of exogenous and endogenous hydrophobic electrophiles and have a detoxification role against certain herbicides.</text>
</comment>
<comment type="catalytic activity">
    <reaction>
        <text>RX + glutathione = an S-substituted glutathione + a halide anion + H(+)</text>
        <dbReference type="Rhea" id="RHEA:16437"/>
        <dbReference type="ChEBI" id="CHEBI:15378"/>
        <dbReference type="ChEBI" id="CHEBI:16042"/>
        <dbReference type="ChEBI" id="CHEBI:17792"/>
        <dbReference type="ChEBI" id="CHEBI:57925"/>
        <dbReference type="ChEBI" id="CHEBI:90779"/>
        <dbReference type="EC" id="2.5.1.18"/>
    </reaction>
</comment>
<comment type="subcellular location">
    <subcellularLocation>
        <location evidence="3">Cytoplasm</location>
        <location evidence="3">Cytosol</location>
    </subcellularLocation>
</comment>
<comment type="similarity">
    <text evidence="3">Belongs to the GST superfamily. Tau family.</text>
</comment>
<comment type="sequence caution" evidence="3">
    <conflict type="erroneous termination">
        <sequence resource="EMBL-CDS" id="ABK28444"/>
    </conflict>
    <text>Extended C-terminus.</text>
</comment>
<organism>
    <name type="scientific">Arabidopsis thaliana</name>
    <name type="common">Mouse-ear cress</name>
    <dbReference type="NCBI Taxonomy" id="3702"/>
    <lineage>
        <taxon>Eukaryota</taxon>
        <taxon>Viridiplantae</taxon>
        <taxon>Streptophyta</taxon>
        <taxon>Embryophyta</taxon>
        <taxon>Tracheophyta</taxon>
        <taxon>Spermatophyta</taxon>
        <taxon>Magnoliopsida</taxon>
        <taxon>eudicotyledons</taxon>
        <taxon>Gunneridae</taxon>
        <taxon>Pentapetalae</taxon>
        <taxon>rosids</taxon>
        <taxon>malvids</taxon>
        <taxon>Brassicales</taxon>
        <taxon>Brassicaceae</taxon>
        <taxon>Camelineae</taxon>
        <taxon>Arabidopsis</taxon>
    </lineage>
</organism>
<sequence>MGEREEVKLLGTWYSPVVIRAKIALRLKSVDYDYVEEDLFGSKSELLLKSNPIFKKVPVLIHNTKPVCVSLNIVEYIDETWNSSGSSILPSHPYDRALARFWSVFVDDKWLPTLMAAVVAKSEEAKAKGMEEVEEGLLQLEAAFIALSKGKSFFGGETIGFIDICLGSFLVLLKAREKLKNEKILDELKTPSLYRWANQFLSNEMVKNVVPDIDKVAKFIEEFEDRAQYIRCF</sequence>
<dbReference type="EC" id="2.5.1.18"/>
<dbReference type="EMBL" id="AC009317">
    <property type="protein sequence ID" value="AAF79758.1"/>
    <property type="molecule type" value="Genomic_DNA"/>
</dbReference>
<dbReference type="EMBL" id="CP002684">
    <property type="protein sequence ID" value="AEE33601.1"/>
    <property type="molecule type" value="Genomic_DNA"/>
</dbReference>
<dbReference type="EMBL" id="DQ446376">
    <property type="protein sequence ID" value="ABE65725.1"/>
    <property type="molecule type" value="mRNA"/>
</dbReference>
<dbReference type="EMBL" id="DQ652904">
    <property type="protein sequence ID" value="ABK28444.1"/>
    <property type="status" value="ALT_SEQ"/>
    <property type="molecule type" value="mRNA"/>
</dbReference>
<dbReference type="EMBL" id="AY084992">
    <property type="protein sequence ID" value="AAM61551.1"/>
    <property type="molecule type" value="mRNA"/>
</dbReference>
<dbReference type="PIR" id="D96620">
    <property type="entry name" value="D96620"/>
</dbReference>
<dbReference type="RefSeq" id="NP_176176.1">
    <property type="nucleotide sequence ID" value="NM_104660.2"/>
</dbReference>
<dbReference type="SMR" id="Q9LQ48"/>
<dbReference type="BioGRID" id="27482">
    <property type="interactions" value="1"/>
</dbReference>
<dbReference type="FunCoup" id="Q9LQ48">
    <property type="interactions" value="137"/>
</dbReference>
<dbReference type="STRING" id="3702.Q9LQ48"/>
<dbReference type="PaxDb" id="3702-AT1G59670.1"/>
<dbReference type="ProteomicsDB" id="247261"/>
<dbReference type="EnsemblPlants" id="AT1G59670.1">
    <property type="protein sequence ID" value="AT1G59670.1"/>
    <property type="gene ID" value="AT1G59670"/>
</dbReference>
<dbReference type="GeneID" id="842257"/>
<dbReference type="Gramene" id="AT1G59670.1">
    <property type="protein sequence ID" value="AT1G59670.1"/>
    <property type="gene ID" value="AT1G59670"/>
</dbReference>
<dbReference type="KEGG" id="ath:AT1G59670"/>
<dbReference type="Araport" id="AT1G59670"/>
<dbReference type="TAIR" id="AT1G59670">
    <property type="gene designation" value="GSTU15"/>
</dbReference>
<dbReference type="eggNOG" id="KOG0406">
    <property type="taxonomic scope" value="Eukaryota"/>
</dbReference>
<dbReference type="HOGENOM" id="CLU_011226_18_0_1"/>
<dbReference type="InParanoid" id="Q9LQ48"/>
<dbReference type="OMA" id="TPCLLEW"/>
<dbReference type="OrthoDB" id="4951845at2759"/>
<dbReference type="PhylomeDB" id="Q9LQ48"/>
<dbReference type="BioCyc" id="ARA:AT1G59670-MONOMER"/>
<dbReference type="PRO" id="PR:Q9LQ48"/>
<dbReference type="Proteomes" id="UP000006548">
    <property type="component" value="Chromosome 1"/>
</dbReference>
<dbReference type="ExpressionAtlas" id="Q9LQ48">
    <property type="expression patterns" value="baseline and differential"/>
</dbReference>
<dbReference type="GO" id="GO:0005737">
    <property type="term" value="C:cytoplasm"/>
    <property type="evidence" value="ECO:0000303"/>
    <property type="project" value="TAIR"/>
</dbReference>
<dbReference type="GO" id="GO:0005829">
    <property type="term" value="C:cytosol"/>
    <property type="evidence" value="ECO:0007669"/>
    <property type="project" value="UniProtKB-SubCell"/>
</dbReference>
<dbReference type="GO" id="GO:0004364">
    <property type="term" value="F:glutathione transferase activity"/>
    <property type="evidence" value="ECO:0007669"/>
    <property type="project" value="UniProtKB-EC"/>
</dbReference>
<dbReference type="GO" id="GO:0006749">
    <property type="term" value="P:glutathione metabolic process"/>
    <property type="evidence" value="ECO:0007669"/>
    <property type="project" value="InterPro"/>
</dbReference>
<dbReference type="GO" id="GO:0009407">
    <property type="term" value="P:toxin catabolic process"/>
    <property type="evidence" value="ECO:0000304"/>
    <property type="project" value="TAIR"/>
</dbReference>
<dbReference type="CDD" id="cd03185">
    <property type="entry name" value="GST_C_Tau"/>
    <property type="match status" value="1"/>
</dbReference>
<dbReference type="CDD" id="cd03058">
    <property type="entry name" value="GST_N_Tau"/>
    <property type="match status" value="1"/>
</dbReference>
<dbReference type="FunFam" id="3.40.30.10:FF:000044">
    <property type="entry name" value="Glutathione S-transferase GSTU6"/>
    <property type="match status" value="1"/>
</dbReference>
<dbReference type="FunFam" id="1.20.1050.10:FF:000016">
    <property type="entry name" value="Glutathione S-transferase U9"/>
    <property type="match status" value="1"/>
</dbReference>
<dbReference type="Gene3D" id="1.20.1050.10">
    <property type="match status" value="1"/>
</dbReference>
<dbReference type="Gene3D" id="3.40.30.10">
    <property type="entry name" value="Glutaredoxin"/>
    <property type="match status" value="1"/>
</dbReference>
<dbReference type="InterPro" id="IPR010987">
    <property type="entry name" value="Glutathione-S-Trfase_C-like"/>
</dbReference>
<dbReference type="InterPro" id="IPR036282">
    <property type="entry name" value="Glutathione-S-Trfase_C_sf"/>
</dbReference>
<dbReference type="InterPro" id="IPR040079">
    <property type="entry name" value="Glutathione_S-Trfase"/>
</dbReference>
<dbReference type="InterPro" id="IPR004045">
    <property type="entry name" value="Glutathione_S-Trfase_N"/>
</dbReference>
<dbReference type="InterPro" id="IPR004046">
    <property type="entry name" value="GST_C"/>
</dbReference>
<dbReference type="InterPro" id="IPR045074">
    <property type="entry name" value="GST_C_Tau"/>
</dbReference>
<dbReference type="InterPro" id="IPR045073">
    <property type="entry name" value="Omega/Tau-like"/>
</dbReference>
<dbReference type="InterPro" id="IPR036249">
    <property type="entry name" value="Thioredoxin-like_sf"/>
</dbReference>
<dbReference type="PANTHER" id="PTHR11260:SF628">
    <property type="entry name" value="GLUTATHIONE S-TRANSFERASE U15"/>
    <property type="match status" value="1"/>
</dbReference>
<dbReference type="PANTHER" id="PTHR11260">
    <property type="entry name" value="GLUTATHIONE S-TRANSFERASE, GST, SUPERFAMILY, GST DOMAIN CONTAINING"/>
    <property type="match status" value="1"/>
</dbReference>
<dbReference type="Pfam" id="PF00043">
    <property type="entry name" value="GST_C"/>
    <property type="match status" value="1"/>
</dbReference>
<dbReference type="Pfam" id="PF02798">
    <property type="entry name" value="GST_N"/>
    <property type="match status" value="1"/>
</dbReference>
<dbReference type="SFLD" id="SFLDS00019">
    <property type="entry name" value="Glutathione_Transferase_(cytos"/>
    <property type="match status" value="1"/>
</dbReference>
<dbReference type="SFLD" id="SFLDG01152">
    <property type="entry name" value="Main.3:_Omega-_and_Tau-like"/>
    <property type="match status" value="1"/>
</dbReference>
<dbReference type="SUPFAM" id="SSF47616">
    <property type="entry name" value="GST C-terminal domain-like"/>
    <property type="match status" value="1"/>
</dbReference>
<dbReference type="SUPFAM" id="SSF52833">
    <property type="entry name" value="Thioredoxin-like"/>
    <property type="match status" value="1"/>
</dbReference>
<dbReference type="PROSITE" id="PS50405">
    <property type="entry name" value="GST_CTER"/>
    <property type="match status" value="1"/>
</dbReference>
<dbReference type="PROSITE" id="PS50404">
    <property type="entry name" value="GST_NTER"/>
    <property type="match status" value="1"/>
</dbReference>
<keyword id="KW-0963">Cytoplasm</keyword>
<keyword id="KW-0216">Detoxification</keyword>
<keyword id="KW-0597">Phosphoprotein</keyword>
<keyword id="KW-1185">Reference proteome</keyword>
<keyword id="KW-0808">Transferase</keyword>
<name>GSTUF_ARATH</name>
<proteinExistence type="evidence at transcript level"/>
<feature type="chain" id="PRO_0000413561" description="Glutathione S-transferase U15">
    <location>
        <begin position="1"/>
        <end position="233"/>
    </location>
</feature>
<feature type="domain" description="GST N-terminal">
    <location>
        <begin position="5"/>
        <end position="85"/>
    </location>
</feature>
<feature type="domain" description="GST C-terminal">
    <location>
        <begin position="92"/>
        <end position="219"/>
    </location>
</feature>
<feature type="binding site" evidence="1">
    <location>
        <begin position="15"/>
        <end position="16"/>
    </location>
    <ligand>
        <name>glutathione</name>
        <dbReference type="ChEBI" id="CHEBI:57925"/>
    </ligand>
</feature>
<feature type="binding site" evidence="1">
    <location>
        <begin position="42"/>
        <end position="43"/>
    </location>
    <ligand>
        <name>glutathione</name>
        <dbReference type="ChEBI" id="CHEBI:57925"/>
    </ligand>
</feature>
<feature type="binding site" evidence="1">
    <location>
        <begin position="56"/>
        <end position="57"/>
    </location>
    <ligand>
        <name>glutathione</name>
        <dbReference type="ChEBI" id="CHEBI:57925"/>
    </ligand>
</feature>
<feature type="binding site" evidence="1">
    <location>
        <begin position="69"/>
        <end position="70"/>
    </location>
    <ligand>
        <name>glutathione</name>
        <dbReference type="ChEBI" id="CHEBI:57925"/>
    </ligand>
</feature>
<feature type="modified residue" description="Phosphothreonine" evidence="2">
    <location>
        <position position="158"/>
    </location>
</feature>
<feature type="sequence conflict" description="In Ref. 4; AAM61551." evidence="3" ref="4">
    <original>E</original>
    <variation>Q</variation>
    <location>
        <position position="6"/>
    </location>
</feature>
<feature type="sequence conflict" description="In Ref. 4; AAM61551." evidence="3" ref="4">
    <original>A</original>
    <variation>D</variation>
    <location>
        <position position="24"/>
    </location>
</feature>
<feature type="sequence conflict" description="In Ref. 4; AAM61551." evidence="3" ref="4">
    <original>D</original>
    <variation>N</variation>
    <location>
        <position position="38"/>
    </location>
</feature>
<feature type="sequence conflict" description="In Ref. 4; AAM61551." evidence="3" ref="4">
    <original>IF</original>
    <variation>VY</variation>
    <location>
        <begin position="53"/>
        <end position="54"/>
    </location>
</feature>
<feature type="sequence conflict" description="In Ref. 4; AAM61551." evidence="3" ref="4">
    <original>E</original>
    <variation>D</variation>
    <location>
        <position position="141"/>
    </location>
</feature>
<protein>
    <recommendedName>
        <fullName>Glutathione S-transferase U15</fullName>
        <shortName>AtGSTU15</shortName>
        <ecNumber>2.5.1.18</ecNumber>
    </recommendedName>
    <alternativeName>
        <fullName>GST class-tau member 15</fullName>
    </alternativeName>
</protein>